<name>RNR_MYCPN</name>
<proteinExistence type="inferred from homology"/>
<keyword id="KW-0963">Cytoplasm</keyword>
<keyword id="KW-0269">Exonuclease</keyword>
<keyword id="KW-0378">Hydrolase</keyword>
<keyword id="KW-0540">Nuclease</keyword>
<keyword id="KW-1185">Reference proteome</keyword>
<keyword id="KW-0694">RNA-binding</keyword>
<dbReference type="EC" id="3.1.13.1" evidence="2"/>
<dbReference type="EMBL" id="U00089">
    <property type="protein sequence ID" value="AAB96237.1"/>
    <property type="molecule type" value="Genomic_DNA"/>
</dbReference>
<dbReference type="PIR" id="S73915">
    <property type="entry name" value="S73915"/>
</dbReference>
<dbReference type="RefSeq" id="NP_109931.1">
    <property type="nucleotide sequence ID" value="NC_000912.1"/>
</dbReference>
<dbReference type="RefSeq" id="WP_010874600.1">
    <property type="nucleotide sequence ID" value="NZ_OU342337.1"/>
</dbReference>
<dbReference type="SMR" id="P75529"/>
<dbReference type="IntAct" id="P75529">
    <property type="interactions" value="1"/>
</dbReference>
<dbReference type="STRING" id="272634.MPN_243"/>
<dbReference type="EnsemblBacteria" id="AAB96237">
    <property type="protein sequence ID" value="AAB96237"/>
    <property type="gene ID" value="MPN_243"/>
</dbReference>
<dbReference type="KEGG" id="mpn:MPN_243"/>
<dbReference type="PATRIC" id="fig|272634.6.peg.262"/>
<dbReference type="HOGENOM" id="CLU_002333_7_3_14"/>
<dbReference type="OrthoDB" id="9764149at2"/>
<dbReference type="BioCyc" id="MPNE272634:G1GJ3-385-MONOMER"/>
<dbReference type="Proteomes" id="UP000000808">
    <property type="component" value="Chromosome"/>
</dbReference>
<dbReference type="GO" id="GO:0005829">
    <property type="term" value="C:cytosol"/>
    <property type="evidence" value="ECO:0007669"/>
    <property type="project" value="TreeGrafter"/>
</dbReference>
<dbReference type="GO" id="GO:0008859">
    <property type="term" value="F:exoribonuclease II activity"/>
    <property type="evidence" value="ECO:0007669"/>
    <property type="project" value="UniProtKB-UniRule"/>
</dbReference>
<dbReference type="GO" id="GO:0003723">
    <property type="term" value="F:RNA binding"/>
    <property type="evidence" value="ECO:0007669"/>
    <property type="project" value="UniProtKB-UniRule"/>
</dbReference>
<dbReference type="GO" id="GO:0006402">
    <property type="term" value="P:mRNA catabolic process"/>
    <property type="evidence" value="ECO:0007669"/>
    <property type="project" value="TreeGrafter"/>
</dbReference>
<dbReference type="CDD" id="cd04471">
    <property type="entry name" value="S1_RNase_R"/>
    <property type="match status" value="1"/>
</dbReference>
<dbReference type="Gene3D" id="2.40.50.140">
    <property type="entry name" value="Nucleic acid-binding proteins"/>
    <property type="match status" value="1"/>
</dbReference>
<dbReference type="HAMAP" id="MF_01895">
    <property type="entry name" value="RNase_R"/>
    <property type="match status" value="1"/>
</dbReference>
<dbReference type="InterPro" id="IPR011129">
    <property type="entry name" value="CSD"/>
</dbReference>
<dbReference type="InterPro" id="IPR012340">
    <property type="entry name" value="NA-bd_OB-fold"/>
</dbReference>
<dbReference type="InterPro" id="IPR001900">
    <property type="entry name" value="RNase_II/R"/>
</dbReference>
<dbReference type="InterPro" id="IPR022966">
    <property type="entry name" value="RNase_II/R_CS"/>
</dbReference>
<dbReference type="InterPro" id="IPR004476">
    <property type="entry name" value="RNase_II/RNase_R"/>
</dbReference>
<dbReference type="InterPro" id="IPR011805">
    <property type="entry name" value="RNase_R"/>
</dbReference>
<dbReference type="InterPro" id="IPR050180">
    <property type="entry name" value="RNR_Ribonuclease"/>
</dbReference>
<dbReference type="InterPro" id="IPR003029">
    <property type="entry name" value="S1_domain"/>
</dbReference>
<dbReference type="NCBIfam" id="TIGR00358">
    <property type="entry name" value="3_prime_RNase"/>
    <property type="match status" value="1"/>
</dbReference>
<dbReference type="NCBIfam" id="TIGR02063">
    <property type="entry name" value="RNase_R"/>
    <property type="match status" value="1"/>
</dbReference>
<dbReference type="PANTHER" id="PTHR23355:SF9">
    <property type="entry name" value="DIS3-LIKE EXONUCLEASE 2"/>
    <property type="match status" value="1"/>
</dbReference>
<dbReference type="PANTHER" id="PTHR23355">
    <property type="entry name" value="RIBONUCLEASE"/>
    <property type="match status" value="1"/>
</dbReference>
<dbReference type="Pfam" id="PF00773">
    <property type="entry name" value="RNB"/>
    <property type="match status" value="1"/>
</dbReference>
<dbReference type="Pfam" id="PF00575">
    <property type="entry name" value="S1"/>
    <property type="match status" value="1"/>
</dbReference>
<dbReference type="SMART" id="SM00357">
    <property type="entry name" value="CSP"/>
    <property type="match status" value="1"/>
</dbReference>
<dbReference type="SMART" id="SM00955">
    <property type="entry name" value="RNB"/>
    <property type="match status" value="1"/>
</dbReference>
<dbReference type="SMART" id="SM00316">
    <property type="entry name" value="S1"/>
    <property type="match status" value="1"/>
</dbReference>
<dbReference type="SUPFAM" id="SSF50249">
    <property type="entry name" value="Nucleic acid-binding proteins"/>
    <property type="match status" value="3"/>
</dbReference>
<dbReference type="PROSITE" id="PS01175">
    <property type="entry name" value="RIBONUCLEASE_II"/>
    <property type="match status" value="1"/>
</dbReference>
<dbReference type="PROSITE" id="PS50126">
    <property type="entry name" value="S1"/>
    <property type="match status" value="1"/>
</dbReference>
<accession>P75529</accession>
<evidence type="ECO:0000255" key="1"/>
<evidence type="ECO:0000255" key="2">
    <source>
        <dbReference type="HAMAP-Rule" id="MF_01895"/>
    </source>
</evidence>
<comment type="function">
    <text evidence="2">3'-5' exoribonuclease that releases 5'-nucleoside monophosphates and is involved in maturation of structured RNAs.</text>
</comment>
<comment type="catalytic activity">
    <reaction evidence="2">
        <text>Exonucleolytic cleavage in the 3'- to 5'-direction to yield nucleoside 5'-phosphates.</text>
        <dbReference type="EC" id="3.1.13.1"/>
    </reaction>
</comment>
<comment type="subcellular location">
    <subcellularLocation>
        <location evidence="2">Cytoplasm</location>
    </subcellularLocation>
</comment>
<comment type="similarity">
    <text evidence="2">Belongs to the RNR ribonuclease family. RNase R subfamily.</text>
</comment>
<protein>
    <recommendedName>
        <fullName evidence="2">Ribonuclease R</fullName>
        <shortName evidence="2">RNase R</shortName>
        <ecNumber evidence="2">3.1.13.1</ecNumber>
    </recommendedName>
    <alternativeName>
        <fullName>VacB protein homolog</fullName>
    </alternativeName>
</protein>
<sequence length="726" mass="83219">MKVLTDLQKRIFAIVKKENGKPIPPGIVVRMMENQAGFPGKQQVYRAIDDLLEWHIFRKSGGATNQLLINYELADPVLDQKFQGILNLGNKNTGFVRPLDDDKTVYYIHFSNLAGALDGDLVEFCPLDKPQVGDKFDAAVLKIVKRSRVLYAGNFLIEYSDFGQEFRIVADNPRFYLTPIVNKASVPAELESNTKVAFQIDEYDPANNLCKVSIQQILGNNDEPLINLKAIMLDHSIVFEDNDVVEQQAAKLQFDEKEQSKPYRKDLTELAFVTIDPATSKDLDDAIYVKRTDKGFVLYVAIADVAYYVQRNSELDIEARHKTSSIYLPGYYVVPMLPERLSNELCSLNPNEKRYVVVCELNFDHEARLNFSEVYPATIVSQRRFAYSEVNDWLEDSDALKDESATVLESLKAGFTLSELIAEQRKKKGTIDLSHSETEVVVDQNYYPIEIRFLTHGKAETMIENLMVVANEAVAWTLTNHKVHLPYRVHPRPSKKKLQMLLENIVELKITQPNFVLDTVTSTQIAAWLKENKDNPSYDIFVILLLRTLGKAFYIVNPLIHFSIGSHHYTHFTSPIRRYADLTVHRLLWMNLFTPERFTDTEREQLNAELEQICETINDTEIKINGCERTANDYLTTLYLSKQVGQTFHGFISAITSFGIFMRMDENNFDGLIKITSIPEDFFVFEKDRMVLRGKRTNKVFRIGDRLTAKLTEIDTVQKRAILTLV</sequence>
<gene>
    <name evidence="2" type="primary">rnr</name>
    <name type="synonym">vacB</name>
    <name type="ordered locus">MPN_243</name>
    <name type="ORF">MP589</name>
</gene>
<feature type="chain" id="PRO_0000166409" description="Ribonuclease R">
    <location>
        <begin position="1"/>
        <end position="726"/>
    </location>
</feature>
<feature type="domain" description="RNB" evidence="1">
    <location>
        <begin position="264"/>
        <end position="592"/>
    </location>
</feature>
<feature type="domain" description="S1 motif" evidence="2">
    <location>
        <begin position="645"/>
        <end position="726"/>
    </location>
</feature>
<reference key="1">
    <citation type="journal article" date="1996" name="Nucleic Acids Res.">
        <title>Complete sequence analysis of the genome of the bacterium Mycoplasma pneumoniae.</title>
        <authorList>
            <person name="Himmelreich R."/>
            <person name="Hilbert H."/>
            <person name="Plagens H."/>
            <person name="Pirkl E."/>
            <person name="Li B.-C."/>
            <person name="Herrmann R."/>
        </authorList>
    </citation>
    <scope>NUCLEOTIDE SEQUENCE [LARGE SCALE GENOMIC DNA]</scope>
    <source>
        <strain>ATCC 29342 / M129 / Subtype 1</strain>
    </source>
</reference>
<organism>
    <name type="scientific">Mycoplasma pneumoniae (strain ATCC 29342 / M129 / Subtype 1)</name>
    <name type="common">Mycoplasmoides pneumoniae</name>
    <dbReference type="NCBI Taxonomy" id="272634"/>
    <lineage>
        <taxon>Bacteria</taxon>
        <taxon>Bacillati</taxon>
        <taxon>Mycoplasmatota</taxon>
        <taxon>Mycoplasmoidales</taxon>
        <taxon>Mycoplasmoidaceae</taxon>
        <taxon>Mycoplasmoides</taxon>
    </lineage>
</organism>